<reference key="1">
    <citation type="journal article" date="2000" name="Proc. Natl. Acad. Sci. U.S.A.">
        <title>Archaeal adaptation to higher temperatures revealed by genomic sequence of Thermoplasma volcanium.</title>
        <authorList>
            <person name="Kawashima T."/>
            <person name="Amano N."/>
            <person name="Koike H."/>
            <person name="Makino S."/>
            <person name="Higuchi S."/>
            <person name="Kawashima-Ohya Y."/>
            <person name="Watanabe K."/>
            <person name="Yamazaki M."/>
            <person name="Kanehori K."/>
            <person name="Kawamoto T."/>
            <person name="Nunoshiba T."/>
            <person name="Yamamoto Y."/>
            <person name="Aramaki H."/>
            <person name="Makino K."/>
            <person name="Suzuki M."/>
        </authorList>
    </citation>
    <scope>NUCLEOTIDE SEQUENCE [LARGE SCALE GENOMIC DNA]</scope>
    <source>
        <strain>ATCC 51530 / DSM 4299 / JCM 9571 / NBRC 15438 / GSS1</strain>
    </source>
</reference>
<organism>
    <name type="scientific">Thermoplasma volcanium (strain ATCC 51530 / DSM 4299 / JCM 9571 / NBRC 15438 / GSS1)</name>
    <dbReference type="NCBI Taxonomy" id="273116"/>
    <lineage>
        <taxon>Archaea</taxon>
        <taxon>Methanobacteriati</taxon>
        <taxon>Thermoplasmatota</taxon>
        <taxon>Thermoplasmata</taxon>
        <taxon>Thermoplasmatales</taxon>
        <taxon>Thermoplasmataceae</taxon>
        <taxon>Thermoplasma</taxon>
    </lineage>
</organism>
<comment type="catalytic activity">
    <reaction evidence="1">
        <text>5-amino-1-(5-phospho-D-ribosyl)imidazole-4-carboxylate + L-aspartate + ATP = (2S)-2-[5-amino-1-(5-phospho-beta-D-ribosyl)imidazole-4-carboxamido]succinate + ADP + phosphate + 2 H(+)</text>
        <dbReference type="Rhea" id="RHEA:22628"/>
        <dbReference type="ChEBI" id="CHEBI:15378"/>
        <dbReference type="ChEBI" id="CHEBI:29991"/>
        <dbReference type="ChEBI" id="CHEBI:30616"/>
        <dbReference type="ChEBI" id="CHEBI:43474"/>
        <dbReference type="ChEBI" id="CHEBI:58443"/>
        <dbReference type="ChEBI" id="CHEBI:77657"/>
        <dbReference type="ChEBI" id="CHEBI:456216"/>
        <dbReference type="EC" id="6.3.2.6"/>
    </reaction>
</comment>
<comment type="pathway">
    <text evidence="1">Purine metabolism; IMP biosynthesis via de novo pathway; 5-amino-1-(5-phospho-D-ribosyl)imidazole-4-carboxamide from 5-amino-1-(5-phospho-D-ribosyl)imidazole-4-carboxylate: step 1/2.</text>
</comment>
<comment type="similarity">
    <text evidence="1">Belongs to the SAICAR synthetase family.</text>
</comment>
<protein>
    <recommendedName>
        <fullName evidence="1">Phosphoribosylaminoimidazole-succinocarboxamide synthase</fullName>
        <ecNumber evidence="1">6.3.2.6</ecNumber>
    </recommendedName>
    <alternativeName>
        <fullName evidence="1">SAICAR synthetase</fullName>
    </alternativeName>
</protein>
<sequence>MKLLTTGKVKDVYDDGDTLVFKFSNRISVFDKIIPNEIDNKGESLCRTSAFWFQLIESYGMKSHFIELIDNRTMRVRKFAVPNKVSLGSSNYVIPLEFITRYYVAGSLYDRIKEGKVKPMDIGLKHVPEYGEKLIDPIFEATTKREETDRLLTKKEAMEIGGLTLEDYCEIMEAVFKIDRRIDMEVSKRGLIHADGKKEIALDRERRIVVVDTFGTADEDRFWDEKEYDNGRVVELSKEMVRQYYRSIGYHDKLYYARENGLPEPDIPALSDDMVSKVSDLYRMMFEKITGQKW</sequence>
<dbReference type="EC" id="6.3.2.6" evidence="1"/>
<dbReference type="EMBL" id="BA000011">
    <property type="protein sequence ID" value="BAB60456.1"/>
    <property type="molecule type" value="Genomic_DNA"/>
</dbReference>
<dbReference type="RefSeq" id="WP_010917549.1">
    <property type="nucleotide sequence ID" value="NC_002689.2"/>
</dbReference>
<dbReference type="SMR" id="Q978V1"/>
<dbReference type="STRING" id="273116.gene:9382122"/>
<dbReference type="PaxDb" id="273116-14325553"/>
<dbReference type="GeneID" id="1441431"/>
<dbReference type="KEGG" id="tvo:TVG1355049"/>
<dbReference type="eggNOG" id="arCOG04421">
    <property type="taxonomic scope" value="Archaea"/>
</dbReference>
<dbReference type="HOGENOM" id="CLU_045637_1_0_2"/>
<dbReference type="OrthoDB" id="10775at2157"/>
<dbReference type="PhylomeDB" id="Q978V1"/>
<dbReference type="UniPathway" id="UPA00074">
    <property type="reaction ID" value="UER00131"/>
</dbReference>
<dbReference type="Proteomes" id="UP000001017">
    <property type="component" value="Chromosome"/>
</dbReference>
<dbReference type="GO" id="GO:0005737">
    <property type="term" value="C:cytoplasm"/>
    <property type="evidence" value="ECO:0007669"/>
    <property type="project" value="TreeGrafter"/>
</dbReference>
<dbReference type="GO" id="GO:0005524">
    <property type="term" value="F:ATP binding"/>
    <property type="evidence" value="ECO:0007669"/>
    <property type="project" value="UniProtKB-KW"/>
</dbReference>
<dbReference type="GO" id="GO:0004639">
    <property type="term" value="F:phosphoribosylaminoimidazolesuccinocarboxamide synthase activity"/>
    <property type="evidence" value="ECO:0007669"/>
    <property type="project" value="UniProtKB-UniRule"/>
</dbReference>
<dbReference type="GO" id="GO:0006189">
    <property type="term" value="P:'de novo' IMP biosynthetic process"/>
    <property type="evidence" value="ECO:0007669"/>
    <property type="project" value="UniProtKB-UniRule"/>
</dbReference>
<dbReference type="CDD" id="cd01414">
    <property type="entry name" value="SAICAR_synt_Sc"/>
    <property type="match status" value="1"/>
</dbReference>
<dbReference type="Gene3D" id="3.30.470.20">
    <property type="entry name" value="ATP-grasp fold, B domain"/>
    <property type="match status" value="1"/>
</dbReference>
<dbReference type="Gene3D" id="3.30.200.20">
    <property type="entry name" value="Phosphorylase Kinase, domain 1"/>
    <property type="match status" value="1"/>
</dbReference>
<dbReference type="HAMAP" id="MF_00137">
    <property type="entry name" value="SAICAR_synth"/>
    <property type="match status" value="1"/>
</dbReference>
<dbReference type="InterPro" id="IPR028923">
    <property type="entry name" value="SAICAR_synt/ADE2_N"/>
</dbReference>
<dbReference type="InterPro" id="IPR018236">
    <property type="entry name" value="SAICAR_synthetase_CS"/>
</dbReference>
<dbReference type="NCBIfam" id="NF010564">
    <property type="entry name" value="PRK13959.1-1"/>
    <property type="match status" value="1"/>
</dbReference>
<dbReference type="PANTHER" id="PTHR43700">
    <property type="entry name" value="PHOSPHORIBOSYLAMINOIMIDAZOLE-SUCCINOCARBOXAMIDE SYNTHASE"/>
    <property type="match status" value="1"/>
</dbReference>
<dbReference type="PANTHER" id="PTHR43700:SF1">
    <property type="entry name" value="PHOSPHORIBOSYLAMINOIMIDAZOLE-SUCCINOCARBOXAMIDE SYNTHASE"/>
    <property type="match status" value="1"/>
</dbReference>
<dbReference type="Pfam" id="PF01259">
    <property type="entry name" value="SAICAR_synt"/>
    <property type="match status" value="1"/>
</dbReference>
<dbReference type="SUPFAM" id="SSF56104">
    <property type="entry name" value="SAICAR synthase-like"/>
    <property type="match status" value="1"/>
</dbReference>
<dbReference type="PROSITE" id="PS01057">
    <property type="entry name" value="SAICAR_SYNTHETASE_1"/>
    <property type="match status" value="1"/>
</dbReference>
<keyword id="KW-0067">ATP-binding</keyword>
<keyword id="KW-0436">Ligase</keyword>
<keyword id="KW-0547">Nucleotide-binding</keyword>
<keyword id="KW-0658">Purine biosynthesis</keyword>
<proteinExistence type="inferred from homology"/>
<feature type="chain" id="PRO_0000100922" description="Phosphoribosylaminoimidazole-succinocarboxamide synthase">
    <location>
        <begin position="1"/>
        <end position="294"/>
    </location>
</feature>
<accession>Q978V1</accession>
<evidence type="ECO:0000255" key="1">
    <source>
        <dbReference type="HAMAP-Rule" id="MF_00137"/>
    </source>
</evidence>
<gene>
    <name evidence="1" type="primary">purC</name>
    <name type="ordered locus">TV1314</name>
    <name type="ORF">TVG1355049</name>
</gene>
<name>PUR7_THEVO</name>